<dbReference type="EC" id="2.7.4.31" evidence="3"/>
<dbReference type="EMBL" id="L77117">
    <property type="protein sequence ID" value="AAB98446.1"/>
    <property type="molecule type" value="Genomic_DNA"/>
</dbReference>
<dbReference type="PIR" id="B64357">
    <property type="entry name" value="B64357"/>
</dbReference>
<dbReference type="RefSeq" id="WP_010869957.1">
    <property type="nucleotide sequence ID" value="NC_000909.1"/>
</dbReference>
<dbReference type="SMR" id="Q57900"/>
<dbReference type="FunCoup" id="Q57900">
    <property type="interactions" value="110"/>
</dbReference>
<dbReference type="STRING" id="243232.MJ_0458"/>
<dbReference type="PaxDb" id="243232-MJ_0458"/>
<dbReference type="EnsemblBacteria" id="AAB98446">
    <property type="protein sequence ID" value="AAB98446"/>
    <property type="gene ID" value="MJ_0458"/>
</dbReference>
<dbReference type="GeneID" id="1451319"/>
<dbReference type="KEGG" id="mja:MJ_0458"/>
<dbReference type="eggNOG" id="arCOG00859">
    <property type="taxonomic scope" value="Archaea"/>
</dbReference>
<dbReference type="HOGENOM" id="CLU_089197_0_0_2"/>
<dbReference type="InParanoid" id="Q57900"/>
<dbReference type="OrthoDB" id="50461at2157"/>
<dbReference type="PhylomeDB" id="Q57900"/>
<dbReference type="BioCyc" id="MetaCyc:MONOMER-19567"/>
<dbReference type="BRENDA" id="2.7.4.3">
    <property type="organism ID" value="3260"/>
</dbReference>
<dbReference type="BRENDA" id="2.7.4.31">
    <property type="organism ID" value="3260"/>
</dbReference>
<dbReference type="UniPathway" id="UPA00080"/>
<dbReference type="Proteomes" id="UP000000805">
    <property type="component" value="Chromosome"/>
</dbReference>
<dbReference type="GO" id="GO:0005524">
    <property type="term" value="F:ATP binding"/>
    <property type="evidence" value="ECO:0007669"/>
    <property type="project" value="UniProtKB-KW"/>
</dbReference>
<dbReference type="GO" id="GO:0016301">
    <property type="term" value="F:kinase activity"/>
    <property type="evidence" value="ECO:0007669"/>
    <property type="project" value="UniProtKB-KW"/>
</dbReference>
<dbReference type="CDD" id="cd04240">
    <property type="entry name" value="AAK_UC"/>
    <property type="match status" value="1"/>
</dbReference>
<dbReference type="Gene3D" id="3.40.1160.10">
    <property type="entry name" value="Acetylglutamate kinase-like"/>
    <property type="match status" value="1"/>
</dbReference>
<dbReference type="InterPro" id="IPR036393">
    <property type="entry name" value="AceGlu_kinase-like_sf"/>
</dbReference>
<dbReference type="InterPro" id="IPR001048">
    <property type="entry name" value="Asp/Glu/Uridylate_kinase"/>
</dbReference>
<dbReference type="InterPro" id="IPR053666">
    <property type="entry name" value="Furan-3-ylmethyl_P_kinase"/>
</dbReference>
<dbReference type="InterPro" id="IPR011375">
    <property type="entry name" value="MfnE"/>
</dbReference>
<dbReference type="NCBIfam" id="NF040622">
    <property type="entry name" value="MfnE"/>
    <property type="match status" value="1"/>
</dbReference>
<dbReference type="Pfam" id="PF00696">
    <property type="entry name" value="AA_kinase"/>
    <property type="match status" value="1"/>
</dbReference>
<dbReference type="PIRSF" id="PIRSF004857">
    <property type="entry name" value="Kin_aa_kin"/>
    <property type="match status" value="1"/>
</dbReference>
<dbReference type="SUPFAM" id="SSF53633">
    <property type="entry name" value="Carbamate kinase-like"/>
    <property type="match status" value="1"/>
</dbReference>
<gene>
    <name evidence="5" type="primary">mfnE</name>
    <name evidence="4" type="synonym">adkB</name>
    <name type="ordered locus">MJ0458</name>
</gene>
<name>MFNE_METJA</name>
<comment type="function">
    <text evidence="2 3">Catalyzes the formation of 5-(aminomethyl)-3-furanmethanol diphosphate (F1-PP) from 5-(aminomethyl)-3-furanmethanol phosphate (F1-P) and ATP (PubMed:26100040). In vitro, can also act as an adenylate kinase that catalyzes the transfer of a phosphoryl group from ATP to AMP, generating two molecules of ADP (PubMed:22002406).</text>
</comment>
<comment type="catalytic activity">
    <reaction evidence="3">
        <text>[5-(aminomethyl)-3-furyl]methyl phosphate + ATP = [5-(aminomethyl)furan-3-yl]methyl diphosphate + ADP</text>
        <dbReference type="Rhea" id="RHEA:47836"/>
        <dbReference type="ChEBI" id="CHEBI:30616"/>
        <dbReference type="ChEBI" id="CHEBI:83431"/>
        <dbReference type="ChEBI" id="CHEBI:88054"/>
        <dbReference type="ChEBI" id="CHEBI:456216"/>
        <dbReference type="EC" id="2.7.4.31"/>
    </reaction>
</comment>
<comment type="cofactor">
    <cofactor evidence="3">
        <name>Mg(2+)</name>
        <dbReference type="ChEBI" id="CHEBI:18420"/>
    </cofactor>
</comment>
<comment type="activity regulation">
    <text evidence="3">Inhibited by EDTA.</text>
</comment>
<comment type="biophysicochemical properties">
    <kinetics>
        <KM evidence="2">10.2 uM for ATP</KM>
        <KM evidence="2">26.2 uM for AMP</KM>
        <Vmax evidence="2">3.1 umol/min/mg enzyme for the adenylate kinase reaction (at 37 degrees Celsius)</Vmax>
    </kinetics>
    <phDependence>
        <text evidence="3">Optimum pH is 7.0.</text>
    </phDependence>
</comment>
<comment type="pathway">
    <text evidence="7">Cofactor biosynthesis; methanofuran biosynthesis.</text>
</comment>
<comment type="subunit">
    <text evidence="2">Homotrimer.</text>
</comment>
<comment type="similarity">
    <text evidence="6">Belongs to the MfnE family.</text>
</comment>
<keyword id="KW-0067">ATP-binding</keyword>
<keyword id="KW-0418">Kinase</keyword>
<keyword id="KW-0460">Magnesium</keyword>
<keyword id="KW-0547">Nucleotide-binding</keyword>
<keyword id="KW-1185">Reference proteome</keyword>
<keyword id="KW-0808">Transferase</keyword>
<organism>
    <name type="scientific">Methanocaldococcus jannaschii (strain ATCC 43067 / DSM 2661 / JAL-1 / JCM 10045 / NBRC 100440)</name>
    <name type="common">Methanococcus jannaschii</name>
    <dbReference type="NCBI Taxonomy" id="243232"/>
    <lineage>
        <taxon>Archaea</taxon>
        <taxon>Methanobacteriati</taxon>
        <taxon>Methanobacteriota</taxon>
        <taxon>Methanomada group</taxon>
        <taxon>Methanococci</taxon>
        <taxon>Methanococcales</taxon>
        <taxon>Methanocaldococcaceae</taxon>
        <taxon>Methanocaldococcus</taxon>
    </lineage>
</organism>
<proteinExistence type="evidence at protein level"/>
<sequence>MHIVKIGGSLTYDAKPLLKALKNYAKENNKKIVIIPGGGEFANVVRKIDKALNISNSLSHKLAIKCMDLIGEVYAEIGYIKAYDTLFDLKREIEKEKIAILLPSKILLSTDIAEHSWAITSDSLSLYIGKLLDVREVIIATDVDGIYDKFPGGKLLNIINANDIKGLTSVDETFPILLKQFKMNAYVVNGRHPERVMDILEGKHNIYTKIVGIDKI</sequence>
<feature type="chain" id="PRO_0000106886" description="[5-(aminomethyl)furan-3-yl]methyl phosphate kinase">
    <location>
        <begin position="1"/>
        <end position="216"/>
    </location>
</feature>
<feature type="binding site" evidence="1">
    <location>
        <begin position="5"/>
        <end position="9"/>
    </location>
    <ligand>
        <name>ATP</name>
        <dbReference type="ChEBI" id="CHEBI:30616"/>
    </ligand>
</feature>
<feature type="binding site" evidence="1">
    <location>
        <position position="39"/>
    </location>
    <ligand>
        <name>ATP</name>
        <dbReference type="ChEBI" id="CHEBI:30616"/>
    </ligand>
</feature>
<feature type="binding site" evidence="1">
    <location>
        <position position="142"/>
    </location>
    <ligand>
        <name>ATP</name>
        <dbReference type="ChEBI" id="CHEBI:30616"/>
    </ligand>
</feature>
<feature type="binding site" evidence="1">
    <location>
        <begin position="147"/>
        <end position="152"/>
    </location>
    <ligand>
        <name>ATP</name>
        <dbReference type="ChEBI" id="CHEBI:30616"/>
    </ligand>
</feature>
<feature type="binding site" evidence="1">
    <location>
        <position position="166"/>
    </location>
    <ligand>
        <name>ATP</name>
        <dbReference type="ChEBI" id="CHEBI:30616"/>
    </ligand>
</feature>
<evidence type="ECO:0000250" key="1">
    <source>
        <dbReference type="UniProtKB" id="Q9HLX1"/>
    </source>
</evidence>
<evidence type="ECO:0000269" key="2">
    <source>
    </source>
</evidence>
<evidence type="ECO:0000269" key="3">
    <source>
    </source>
</evidence>
<evidence type="ECO:0000303" key="4">
    <source>
    </source>
</evidence>
<evidence type="ECO:0000303" key="5">
    <source>
    </source>
</evidence>
<evidence type="ECO:0000305" key="6"/>
<evidence type="ECO:0000305" key="7">
    <source>
    </source>
</evidence>
<reference key="1">
    <citation type="journal article" date="1996" name="Science">
        <title>Complete genome sequence of the methanogenic archaeon, Methanococcus jannaschii.</title>
        <authorList>
            <person name="Bult C.J."/>
            <person name="White O."/>
            <person name="Olsen G.J."/>
            <person name="Zhou L."/>
            <person name="Fleischmann R.D."/>
            <person name="Sutton G.G."/>
            <person name="Blake J.A."/>
            <person name="FitzGerald L.M."/>
            <person name="Clayton R.A."/>
            <person name="Gocayne J.D."/>
            <person name="Kerlavage A.R."/>
            <person name="Dougherty B.A."/>
            <person name="Tomb J.-F."/>
            <person name="Adams M.D."/>
            <person name="Reich C.I."/>
            <person name="Overbeek R."/>
            <person name="Kirkness E.F."/>
            <person name="Weinstock K.G."/>
            <person name="Merrick J.M."/>
            <person name="Glodek A."/>
            <person name="Scott J.L."/>
            <person name="Geoghagen N.S.M."/>
            <person name="Weidman J.F."/>
            <person name="Fuhrmann J.L."/>
            <person name="Nguyen D."/>
            <person name="Utterback T.R."/>
            <person name="Kelley J.M."/>
            <person name="Peterson J.D."/>
            <person name="Sadow P.W."/>
            <person name="Hanna M.C."/>
            <person name="Cotton M.D."/>
            <person name="Roberts K.M."/>
            <person name="Hurst M.A."/>
            <person name="Kaine B.P."/>
            <person name="Borodovsky M."/>
            <person name="Klenk H.-P."/>
            <person name="Fraser C.M."/>
            <person name="Smith H.O."/>
            <person name="Woese C.R."/>
            <person name="Venter J.C."/>
        </authorList>
    </citation>
    <scope>NUCLEOTIDE SEQUENCE [LARGE SCALE GENOMIC DNA]</scope>
    <source>
        <strain>ATCC 43067 / DSM 2661 / JAL-1 / JCM 10045 / NBRC 100440</strain>
    </source>
</reference>
<reference key="2">
    <citation type="journal article" date="2012" name="Arch. Microbiol.">
        <title>A new class of adenylate kinase in methanogens is related to uridylate kinase.</title>
        <authorList>
            <person name="Grochowski L.L."/>
            <person name="Censky K."/>
            <person name="Xu H."/>
            <person name="White R.H."/>
        </authorList>
    </citation>
    <scope>FUNCTION AS AN ADENYLATE KINASE</scope>
    <scope>BIOPHYSICOCHEMICAL PROPERTIES</scope>
    <scope>SUBUNIT</scope>
</reference>
<reference key="3">
    <citation type="journal article" date="2015" name="J. Bacteriol.">
        <title>Identification of the final two genes functioning in methanofuran biosynthesis in Methanocaldococcus jannaschii.</title>
        <authorList>
            <person name="Wang Y."/>
            <person name="Xu H."/>
            <person name="Jones M.K."/>
            <person name="White R.H."/>
        </authorList>
    </citation>
    <scope>FUNCTION</scope>
    <scope>CATALYTIC ACTIVITY</scope>
    <scope>COFACTOR</scope>
    <scope>ACTIVITY REGULATION</scope>
    <scope>BIOPHYSICOCHEMICAL PROPERTIES</scope>
    <scope>PATHWAY</scope>
</reference>
<reference key="4">
    <citation type="journal article" date="2013" name="Acta Crystallogr. F">
        <title>Crystallization and preliminary X-ray diffraction analysis of MJ0458, an adenylate kinase from Methanocaldococcus jannaschii.</title>
        <authorList>
            <person name="Wang X."/>
            <person name="Yuan Y."/>
            <person name="Teng M."/>
            <person name="Niu L."/>
            <person name="Gao Y."/>
        </authorList>
    </citation>
    <scope>CRYSTALLIZATION</scope>
</reference>
<accession>Q57900</accession>
<protein>
    <recommendedName>
        <fullName evidence="6">[5-(aminomethyl)furan-3-yl]methyl phosphate kinase</fullName>
        <ecNumber evidence="3">2.7.4.31</ecNumber>
    </recommendedName>
    <alternativeName>
        <fullName evidence="6">5-(aminomethyl)-3-furanmethanol phosphate kinase</fullName>
    </alternativeName>
</protein>